<name>MUTS_ECOL5</name>
<organism>
    <name type="scientific">Escherichia coli O6:K15:H31 (strain 536 / UPEC)</name>
    <dbReference type="NCBI Taxonomy" id="362663"/>
    <lineage>
        <taxon>Bacteria</taxon>
        <taxon>Pseudomonadati</taxon>
        <taxon>Pseudomonadota</taxon>
        <taxon>Gammaproteobacteria</taxon>
        <taxon>Enterobacterales</taxon>
        <taxon>Enterobacteriaceae</taxon>
        <taxon>Escherichia</taxon>
    </lineage>
</organism>
<sequence length="853" mass="95317">MSTPENFDAHTPMMQQYLKLKAQHPEILLFYRMGDFYELFYDDAKRASQLLDISLTKRGASAGEPIPMAGIPYHAVENYLAKLVNQGESVAICEQIGDPATSKGPVERKVVRIVTPGTISDEALLQERQDNLLAAIWQDSKGFGYATLDISSGRFRLSEPADRETMAAELQRTNPAELLYAEDFAEMSLIEGRRGLRRRPLWEFEIDTARQQLNLQFGTRDLVGFGVENAPRGLCAAGCLLQYAKDTQRTTLPHIRSITMERQQDSIIMDAATRRNLEITQNLAGGAENTLASVLDCTVTPMGSRMLKRWLHMPVRDTRVLLERQQTIGALQDFTAELQPVLRQVGDLERILARLALRTARPRDLARMRHAFQQLPELRAQLENVDSAPVQALREKMGEFAELRDLLERAIIDTPPVLVRDGGVIASGYNEELDEWRALADGATDYLERLEVRERERTGLDTLKVGFNAVHGYYIQISRGQSHLAPINYMRRQTLKNAERYIIPELKEYEDKVLTSKGKALALEKQLYEELFDLLLPHLEALQQSASALAELDVLVNLAERAYTLNYTCPTFIDKPGIRITEGRHPVVEQVLNEPFIANPLNLSPQRRMLIITGPNMGGKSTYMRQTALIALMAYIGSYVPAQKVEIGPIDRIFTRVGAADDLASGRSTFMVEMTETANILHNATEYSLVLMDEIGRGTSTYDGLSLAWACAENLANKIKALTLFATHYFELTQLPEKMEGVANVHLDALEHGDTIAFMHSVQDGAASKSYGLAVAALAGVPKEVIKRARQKLRELESISPNAAATQVDGTQMSLLSVPEETSPAVEALENLDPDSLTPRQALEWIYRLKSLV</sequence>
<feature type="chain" id="PRO_1000008058" description="DNA mismatch repair protein MutS">
    <location>
        <begin position="1"/>
        <end position="853"/>
    </location>
</feature>
<feature type="binding site" evidence="1">
    <location>
        <begin position="614"/>
        <end position="621"/>
    </location>
    <ligand>
        <name>ATP</name>
        <dbReference type="ChEBI" id="CHEBI:30616"/>
    </ligand>
</feature>
<reference key="1">
    <citation type="journal article" date="2006" name="Mol. Microbiol.">
        <title>Role of pathogenicity island-associated integrases in the genome plasticity of uropathogenic Escherichia coli strain 536.</title>
        <authorList>
            <person name="Hochhut B."/>
            <person name="Wilde C."/>
            <person name="Balling G."/>
            <person name="Middendorf B."/>
            <person name="Dobrindt U."/>
            <person name="Brzuszkiewicz E."/>
            <person name="Gottschalk G."/>
            <person name="Carniel E."/>
            <person name="Hacker J."/>
        </authorList>
    </citation>
    <scope>NUCLEOTIDE SEQUENCE [LARGE SCALE GENOMIC DNA]</scope>
    <source>
        <strain>536 / UPEC</strain>
    </source>
</reference>
<dbReference type="EMBL" id="CP000247">
    <property type="protein sequence ID" value="ABG70700.1"/>
    <property type="molecule type" value="Genomic_DNA"/>
</dbReference>
<dbReference type="RefSeq" id="WP_000106696.1">
    <property type="nucleotide sequence ID" value="NC_008253.1"/>
</dbReference>
<dbReference type="SMR" id="Q0TEC9"/>
<dbReference type="KEGG" id="ecp:ECP_2711"/>
<dbReference type="HOGENOM" id="CLU_002472_4_0_6"/>
<dbReference type="Proteomes" id="UP000009182">
    <property type="component" value="Chromosome"/>
</dbReference>
<dbReference type="GO" id="GO:0005829">
    <property type="term" value="C:cytosol"/>
    <property type="evidence" value="ECO:0007669"/>
    <property type="project" value="TreeGrafter"/>
</dbReference>
<dbReference type="GO" id="GO:0005524">
    <property type="term" value="F:ATP binding"/>
    <property type="evidence" value="ECO:0007669"/>
    <property type="project" value="UniProtKB-UniRule"/>
</dbReference>
<dbReference type="GO" id="GO:0140664">
    <property type="term" value="F:ATP-dependent DNA damage sensor activity"/>
    <property type="evidence" value="ECO:0007669"/>
    <property type="project" value="InterPro"/>
</dbReference>
<dbReference type="GO" id="GO:0003684">
    <property type="term" value="F:damaged DNA binding"/>
    <property type="evidence" value="ECO:0007669"/>
    <property type="project" value="UniProtKB-UniRule"/>
</dbReference>
<dbReference type="GO" id="GO:0030983">
    <property type="term" value="F:mismatched DNA binding"/>
    <property type="evidence" value="ECO:0007669"/>
    <property type="project" value="InterPro"/>
</dbReference>
<dbReference type="GO" id="GO:0006298">
    <property type="term" value="P:mismatch repair"/>
    <property type="evidence" value="ECO:0007669"/>
    <property type="project" value="UniProtKB-UniRule"/>
</dbReference>
<dbReference type="CDD" id="cd03284">
    <property type="entry name" value="ABC_MutS1"/>
    <property type="match status" value="1"/>
</dbReference>
<dbReference type="FunFam" id="1.10.1420.10:FF:000002">
    <property type="entry name" value="DNA mismatch repair protein MutS"/>
    <property type="match status" value="1"/>
</dbReference>
<dbReference type="FunFam" id="3.30.420.110:FF:000001">
    <property type="entry name" value="DNA mismatch repair protein MutS"/>
    <property type="match status" value="1"/>
</dbReference>
<dbReference type="FunFam" id="3.40.1170.10:FF:000001">
    <property type="entry name" value="DNA mismatch repair protein MutS"/>
    <property type="match status" value="1"/>
</dbReference>
<dbReference type="FunFam" id="3.40.50.300:FF:000283">
    <property type="entry name" value="DNA mismatch repair protein MutS"/>
    <property type="match status" value="1"/>
</dbReference>
<dbReference type="Gene3D" id="1.10.1420.10">
    <property type="match status" value="2"/>
</dbReference>
<dbReference type="Gene3D" id="6.10.140.430">
    <property type="match status" value="1"/>
</dbReference>
<dbReference type="Gene3D" id="3.40.1170.10">
    <property type="entry name" value="DNA repair protein MutS, domain I"/>
    <property type="match status" value="1"/>
</dbReference>
<dbReference type="Gene3D" id="3.30.420.110">
    <property type="entry name" value="MutS, connector domain"/>
    <property type="match status" value="1"/>
</dbReference>
<dbReference type="Gene3D" id="3.40.50.300">
    <property type="entry name" value="P-loop containing nucleotide triphosphate hydrolases"/>
    <property type="match status" value="1"/>
</dbReference>
<dbReference type="HAMAP" id="MF_00096">
    <property type="entry name" value="MutS"/>
    <property type="match status" value="1"/>
</dbReference>
<dbReference type="InterPro" id="IPR005748">
    <property type="entry name" value="DNA_mismatch_repair_MutS"/>
</dbReference>
<dbReference type="InterPro" id="IPR007695">
    <property type="entry name" value="DNA_mismatch_repair_MutS-lik_N"/>
</dbReference>
<dbReference type="InterPro" id="IPR017261">
    <property type="entry name" value="DNA_mismatch_repair_MutS/MSH"/>
</dbReference>
<dbReference type="InterPro" id="IPR000432">
    <property type="entry name" value="DNA_mismatch_repair_MutS_C"/>
</dbReference>
<dbReference type="InterPro" id="IPR007861">
    <property type="entry name" value="DNA_mismatch_repair_MutS_clamp"/>
</dbReference>
<dbReference type="InterPro" id="IPR007696">
    <property type="entry name" value="DNA_mismatch_repair_MutS_core"/>
</dbReference>
<dbReference type="InterPro" id="IPR016151">
    <property type="entry name" value="DNA_mismatch_repair_MutS_N"/>
</dbReference>
<dbReference type="InterPro" id="IPR036187">
    <property type="entry name" value="DNA_mismatch_repair_MutS_sf"/>
</dbReference>
<dbReference type="InterPro" id="IPR007860">
    <property type="entry name" value="DNA_mmatch_repair_MutS_con_dom"/>
</dbReference>
<dbReference type="InterPro" id="IPR045076">
    <property type="entry name" value="MutS"/>
</dbReference>
<dbReference type="InterPro" id="IPR036678">
    <property type="entry name" value="MutS_con_dom_sf"/>
</dbReference>
<dbReference type="InterPro" id="IPR027417">
    <property type="entry name" value="P-loop_NTPase"/>
</dbReference>
<dbReference type="NCBIfam" id="TIGR01070">
    <property type="entry name" value="mutS1"/>
    <property type="match status" value="1"/>
</dbReference>
<dbReference type="NCBIfam" id="NF003810">
    <property type="entry name" value="PRK05399.1"/>
    <property type="match status" value="1"/>
</dbReference>
<dbReference type="PANTHER" id="PTHR11361:SF34">
    <property type="entry name" value="DNA MISMATCH REPAIR PROTEIN MSH1, MITOCHONDRIAL"/>
    <property type="match status" value="1"/>
</dbReference>
<dbReference type="PANTHER" id="PTHR11361">
    <property type="entry name" value="DNA MISMATCH REPAIR PROTEIN MUTS FAMILY MEMBER"/>
    <property type="match status" value="1"/>
</dbReference>
<dbReference type="Pfam" id="PF01624">
    <property type="entry name" value="MutS_I"/>
    <property type="match status" value="1"/>
</dbReference>
<dbReference type="Pfam" id="PF05188">
    <property type="entry name" value="MutS_II"/>
    <property type="match status" value="1"/>
</dbReference>
<dbReference type="Pfam" id="PF05192">
    <property type="entry name" value="MutS_III"/>
    <property type="match status" value="1"/>
</dbReference>
<dbReference type="Pfam" id="PF05190">
    <property type="entry name" value="MutS_IV"/>
    <property type="match status" value="1"/>
</dbReference>
<dbReference type="Pfam" id="PF00488">
    <property type="entry name" value="MutS_V"/>
    <property type="match status" value="1"/>
</dbReference>
<dbReference type="PIRSF" id="PIRSF037677">
    <property type="entry name" value="DNA_mis_repair_Msh6"/>
    <property type="match status" value="1"/>
</dbReference>
<dbReference type="SMART" id="SM00534">
    <property type="entry name" value="MUTSac"/>
    <property type="match status" value="1"/>
</dbReference>
<dbReference type="SMART" id="SM00533">
    <property type="entry name" value="MUTSd"/>
    <property type="match status" value="1"/>
</dbReference>
<dbReference type="SUPFAM" id="SSF55271">
    <property type="entry name" value="DNA repair protein MutS, domain I"/>
    <property type="match status" value="1"/>
</dbReference>
<dbReference type="SUPFAM" id="SSF53150">
    <property type="entry name" value="DNA repair protein MutS, domain II"/>
    <property type="match status" value="1"/>
</dbReference>
<dbReference type="SUPFAM" id="SSF48334">
    <property type="entry name" value="DNA repair protein MutS, domain III"/>
    <property type="match status" value="1"/>
</dbReference>
<dbReference type="SUPFAM" id="SSF52540">
    <property type="entry name" value="P-loop containing nucleoside triphosphate hydrolases"/>
    <property type="match status" value="1"/>
</dbReference>
<dbReference type="PROSITE" id="PS00486">
    <property type="entry name" value="DNA_MISMATCH_REPAIR_2"/>
    <property type="match status" value="1"/>
</dbReference>
<comment type="function">
    <text evidence="1">This protein is involved in the repair of mismatches in DNA. It is possible that it carries out the mismatch recognition step. This protein has a weak ATPase activity.</text>
</comment>
<comment type="similarity">
    <text evidence="1">Belongs to the DNA mismatch repair MutS family.</text>
</comment>
<protein>
    <recommendedName>
        <fullName evidence="1">DNA mismatch repair protein MutS</fullName>
    </recommendedName>
</protein>
<gene>
    <name evidence="1" type="primary">mutS</name>
    <name type="ordered locus">ECP_2711</name>
</gene>
<evidence type="ECO:0000255" key="1">
    <source>
        <dbReference type="HAMAP-Rule" id="MF_00096"/>
    </source>
</evidence>
<keyword id="KW-0067">ATP-binding</keyword>
<keyword id="KW-0227">DNA damage</keyword>
<keyword id="KW-0234">DNA repair</keyword>
<keyword id="KW-0238">DNA-binding</keyword>
<keyword id="KW-0547">Nucleotide-binding</keyword>
<proteinExistence type="inferred from homology"/>
<accession>Q0TEC9</accession>